<proteinExistence type="inferred from homology"/>
<name>RS10_ECO81</name>
<reference key="1">
    <citation type="journal article" date="2009" name="PLoS Genet.">
        <title>Organised genome dynamics in the Escherichia coli species results in highly diverse adaptive paths.</title>
        <authorList>
            <person name="Touchon M."/>
            <person name="Hoede C."/>
            <person name="Tenaillon O."/>
            <person name="Barbe V."/>
            <person name="Baeriswyl S."/>
            <person name="Bidet P."/>
            <person name="Bingen E."/>
            <person name="Bonacorsi S."/>
            <person name="Bouchier C."/>
            <person name="Bouvet O."/>
            <person name="Calteau A."/>
            <person name="Chiapello H."/>
            <person name="Clermont O."/>
            <person name="Cruveiller S."/>
            <person name="Danchin A."/>
            <person name="Diard M."/>
            <person name="Dossat C."/>
            <person name="Karoui M.E."/>
            <person name="Frapy E."/>
            <person name="Garry L."/>
            <person name="Ghigo J.M."/>
            <person name="Gilles A.M."/>
            <person name="Johnson J."/>
            <person name="Le Bouguenec C."/>
            <person name="Lescat M."/>
            <person name="Mangenot S."/>
            <person name="Martinez-Jehanne V."/>
            <person name="Matic I."/>
            <person name="Nassif X."/>
            <person name="Oztas S."/>
            <person name="Petit M.A."/>
            <person name="Pichon C."/>
            <person name="Rouy Z."/>
            <person name="Ruf C.S."/>
            <person name="Schneider D."/>
            <person name="Tourret J."/>
            <person name="Vacherie B."/>
            <person name="Vallenet D."/>
            <person name="Medigue C."/>
            <person name="Rocha E.P.C."/>
            <person name="Denamur E."/>
        </authorList>
    </citation>
    <scope>NUCLEOTIDE SEQUENCE [LARGE SCALE GENOMIC DNA]</scope>
    <source>
        <strain>ED1a</strain>
    </source>
</reference>
<gene>
    <name evidence="1" type="primary">rpsJ</name>
    <name type="ordered locus">ECED1_3984</name>
</gene>
<evidence type="ECO:0000255" key="1">
    <source>
        <dbReference type="HAMAP-Rule" id="MF_00508"/>
    </source>
</evidence>
<evidence type="ECO:0000305" key="2"/>
<sequence length="103" mass="11736">MQNQRIRIRLKAFDHRLIDQATAEIVETAKRTGAQVRGPIPLPTRKERFTVLISPHVNKDARDQYEIRTHLRLVDIVEPTEKTVDALMRLDLAAGVDVQISLG</sequence>
<comment type="function">
    <text evidence="1">Involved in the binding of tRNA to the ribosomes.</text>
</comment>
<comment type="subunit">
    <text evidence="1">Part of the 30S ribosomal subunit.</text>
</comment>
<comment type="similarity">
    <text evidence="1">Belongs to the universal ribosomal protein uS10 family.</text>
</comment>
<protein>
    <recommendedName>
        <fullName evidence="1">Small ribosomal subunit protein uS10</fullName>
    </recommendedName>
    <alternativeName>
        <fullName evidence="2">30S ribosomal protein S10</fullName>
    </alternativeName>
</protein>
<accession>B7N1A5</accession>
<organism>
    <name type="scientific">Escherichia coli O81 (strain ED1a)</name>
    <dbReference type="NCBI Taxonomy" id="585397"/>
    <lineage>
        <taxon>Bacteria</taxon>
        <taxon>Pseudomonadati</taxon>
        <taxon>Pseudomonadota</taxon>
        <taxon>Gammaproteobacteria</taxon>
        <taxon>Enterobacterales</taxon>
        <taxon>Enterobacteriaceae</taxon>
        <taxon>Escherichia</taxon>
    </lineage>
</organism>
<dbReference type="EMBL" id="CU928162">
    <property type="protein sequence ID" value="CAR10123.2"/>
    <property type="molecule type" value="Genomic_DNA"/>
</dbReference>
<dbReference type="RefSeq" id="WP_001181004.1">
    <property type="nucleotide sequence ID" value="NC_011745.1"/>
</dbReference>
<dbReference type="SMR" id="B7N1A5"/>
<dbReference type="GeneID" id="93778666"/>
<dbReference type="KEGG" id="ecq:ECED1_3984"/>
<dbReference type="HOGENOM" id="CLU_122625_1_3_6"/>
<dbReference type="Proteomes" id="UP000000748">
    <property type="component" value="Chromosome"/>
</dbReference>
<dbReference type="GO" id="GO:1990904">
    <property type="term" value="C:ribonucleoprotein complex"/>
    <property type="evidence" value="ECO:0007669"/>
    <property type="project" value="UniProtKB-KW"/>
</dbReference>
<dbReference type="GO" id="GO:0005840">
    <property type="term" value="C:ribosome"/>
    <property type="evidence" value="ECO:0007669"/>
    <property type="project" value="UniProtKB-KW"/>
</dbReference>
<dbReference type="GO" id="GO:0003735">
    <property type="term" value="F:structural constituent of ribosome"/>
    <property type="evidence" value="ECO:0007669"/>
    <property type="project" value="InterPro"/>
</dbReference>
<dbReference type="GO" id="GO:0000049">
    <property type="term" value="F:tRNA binding"/>
    <property type="evidence" value="ECO:0007669"/>
    <property type="project" value="UniProtKB-UniRule"/>
</dbReference>
<dbReference type="GO" id="GO:0006412">
    <property type="term" value="P:translation"/>
    <property type="evidence" value="ECO:0007669"/>
    <property type="project" value="UniProtKB-UniRule"/>
</dbReference>
<dbReference type="FunFam" id="3.30.70.600:FF:000001">
    <property type="entry name" value="30S ribosomal protein S10"/>
    <property type="match status" value="1"/>
</dbReference>
<dbReference type="Gene3D" id="3.30.70.600">
    <property type="entry name" value="Ribosomal protein S10 domain"/>
    <property type="match status" value="1"/>
</dbReference>
<dbReference type="HAMAP" id="MF_00508">
    <property type="entry name" value="Ribosomal_uS10"/>
    <property type="match status" value="1"/>
</dbReference>
<dbReference type="InterPro" id="IPR001848">
    <property type="entry name" value="Ribosomal_uS10"/>
</dbReference>
<dbReference type="InterPro" id="IPR018268">
    <property type="entry name" value="Ribosomal_uS10_CS"/>
</dbReference>
<dbReference type="InterPro" id="IPR027486">
    <property type="entry name" value="Ribosomal_uS10_dom"/>
</dbReference>
<dbReference type="InterPro" id="IPR036838">
    <property type="entry name" value="Ribosomal_uS10_dom_sf"/>
</dbReference>
<dbReference type="NCBIfam" id="NF001861">
    <property type="entry name" value="PRK00596.1"/>
    <property type="match status" value="1"/>
</dbReference>
<dbReference type="NCBIfam" id="TIGR01049">
    <property type="entry name" value="rpsJ_bact"/>
    <property type="match status" value="1"/>
</dbReference>
<dbReference type="PANTHER" id="PTHR11700">
    <property type="entry name" value="30S RIBOSOMAL PROTEIN S10 FAMILY MEMBER"/>
    <property type="match status" value="1"/>
</dbReference>
<dbReference type="Pfam" id="PF00338">
    <property type="entry name" value="Ribosomal_S10"/>
    <property type="match status" value="1"/>
</dbReference>
<dbReference type="PRINTS" id="PR00971">
    <property type="entry name" value="RIBOSOMALS10"/>
</dbReference>
<dbReference type="SMART" id="SM01403">
    <property type="entry name" value="Ribosomal_S10"/>
    <property type="match status" value="1"/>
</dbReference>
<dbReference type="SUPFAM" id="SSF54999">
    <property type="entry name" value="Ribosomal protein S10"/>
    <property type="match status" value="1"/>
</dbReference>
<dbReference type="PROSITE" id="PS00361">
    <property type="entry name" value="RIBOSOMAL_S10"/>
    <property type="match status" value="1"/>
</dbReference>
<feature type="chain" id="PRO_1000146055" description="Small ribosomal subunit protein uS10">
    <location>
        <begin position="1"/>
        <end position="103"/>
    </location>
</feature>
<keyword id="KW-0687">Ribonucleoprotein</keyword>
<keyword id="KW-0689">Ribosomal protein</keyword>